<organism>
    <name type="scientific">Escherichia coli (strain K12)</name>
    <dbReference type="NCBI Taxonomy" id="83333"/>
    <lineage>
        <taxon>Bacteria</taxon>
        <taxon>Pseudomonadati</taxon>
        <taxon>Pseudomonadota</taxon>
        <taxon>Gammaproteobacteria</taxon>
        <taxon>Enterobacterales</taxon>
        <taxon>Enterobacteriaceae</taxon>
        <taxon>Escherichia</taxon>
    </lineage>
</organism>
<reference key="1">
    <citation type="journal article" date="1996" name="DNA Res.">
        <title>A 570-kb DNA sequence of the Escherichia coli K-12 genome corresponding to the 28.0-40.1 min region on the linkage map.</title>
        <authorList>
            <person name="Aiba H."/>
            <person name="Baba T."/>
            <person name="Fujita K."/>
            <person name="Hayashi K."/>
            <person name="Inada T."/>
            <person name="Isono K."/>
            <person name="Itoh T."/>
            <person name="Kasai H."/>
            <person name="Kashimoto K."/>
            <person name="Kimura S."/>
            <person name="Kitakawa M."/>
            <person name="Kitagawa M."/>
            <person name="Makino K."/>
            <person name="Miki T."/>
            <person name="Mizobuchi K."/>
            <person name="Mori H."/>
            <person name="Mori T."/>
            <person name="Motomura K."/>
            <person name="Nakade S."/>
            <person name="Nakamura Y."/>
            <person name="Nashimoto H."/>
            <person name="Nishio Y."/>
            <person name="Oshima T."/>
            <person name="Saito N."/>
            <person name="Sampei G."/>
            <person name="Seki Y."/>
            <person name="Sivasundaram S."/>
            <person name="Tagami H."/>
            <person name="Takeda J."/>
            <person name="Takemoto K."/>
            <person name="Takeuchi Y."/>
            <person name="Wada C."/>
            <person name="Yamamoto Y."/>
            <person name="Horiuchi T."/>
        </authorList>
    </citation>
    <scope>NUCLEOTIDE SEQUENCE [LARGE SCALE GENOMIC DNA]</scope>
    <source>
        <strain>K12 / W3110 / ATCC 27325 / DSM 5911</strain>
    </source>
</reference>
<reference key="2">
    <citation type="journal article" date="1997" name="Science">
        <title>The complete genome sequence of Escherichia coli K-12.</title>
        <authorList>
            <person name="Blattner F.R."/>
            <person name="Plunkett G. III"/>
            <person name="Bloch C.A."/>
            <person name="Perna N.T."/>
            <person name="Burland V."/>
            <person name="Riley M."/>
            <person name="Collado-Vides J."/>
            <person name="Glasner J.D."/>
            <person name="Rode C.K."/>
            <person name="Mayhew G.F."/>
            <person name="Gregor J."/>
            <person name="Davis N.W."/>
            <person name="Kirkpatrick H.A."/>
            <person name="Goeden M.A."/>
            <person name="Rose D.J."/>
            <person name="Mau B."/>
            <person name="Shao Y."/>
        </authorList>
    </citation>
    <scope>NUCLEOTIDE SEQUENCE [LARGE SCALE GENOMIC DNA]</scope>
    <source>
        <strain>K12 / MG1655 / ATCC 47076</strain>
    </source>
</reference>
<reference key="3">
    <citation type="journal article" date="2006" name="Mol. Syst. Biol.">
        <title>Highly accurate genome sequences of Escherichia coli K-12 strains MG1655 and W3110.</title>
        <authorList>
            <person name="Hayashi K."/>
            <person name="Morooka N."/>
            <person name="Yamamoto Y."/>
            <person name="Fujita K."/>
            <person name="Isono K."/>
            <person name="Choi S."/>
            <person name="Ohtsubo E."/>
            <person name="Baba T."/>
            <person name="Wanner B.L."/>
            <person name="Mori H."/>
            <person name="Horiuchi T."/>
        </authorList>
    </citation>
    <scope>NUCLEOTIDE SEQUENCE [LARGE SCALE GENOMIC DNA]</scope>
    <scope>SEQUENCE REVISION TO 489 AND 495</scope>
    <source>
        <strain>K12 / W3110 / ATCC 27325 / DSM 5911</strain>
    </source>
</reference>
<reference key="4">
    <citation type="journal article" date="1991" name="Biochimie">
        <title>Multiple IS insertion sequences near the replication terminus in Escherichia coli K-12.</title>
        <authorList>
            <person name="Moszer I."/>
            <person name="Glaser P."/>
            <person name="Danchin A."/>
        </authorList>
    </citation>
    <scope>NUCLEOTIDE SEQUENCE [GENOMIC DNA] OF 464-852</scope>
    <source>
        <strain>K12</strain>
    </source>
</reference>
<feature type="signal peptide" evidence="1">
    <location>
        <begin position="1"/>
        <end position="21"/>
    </location>
</feature>
<feature type="chain" id="PRO_0000168920" description="Exported protein YdbA">
    <location>
        <begin position="22"/>
        <end position="852"/>
    </location>
</feature>
<feature type="region of interest" description="Disordered" evidence="2">
    <location>
        <begin position="30"/>
        <end position="50"/>
    </location>
</feature>
<feature type="region of interest" description="Disordered" evidence="2">
    <location>
        <begin position="91"/>
        <end position="145"/>
    </location>
</feature>
<feature type="region of interest" description="Disordered" evidence="2">
    <location>
        <begin position="307"/>
        <end position="354"/>
    </location>
</feature>
<feature type="region of interest" description="Disordered" evidence="2">
    <location>
        <begin position="407"/>
        <end position="449"/>
    </location>
</feature>
<feature type="region of interest" description="Disordered" evidence="2">
    <location>
        <begin position="506"/>
        <end position="531"/>
    </location>
</feature>
<feature type="compositionally biased region" description="Low complexity" evidence="2">
    <location>
        <begin position="307"/>
        <end position="319"/>
    </location>
</feature>
<feature type="compositionally biased region" description="Polar residues" evidence="2">
    <location>
        <begin position="339"/>
        <end position="348"/>
    </location>
</feature>
<feature type="compositionally biased region" description="Low complexity" evidence="2">
    <location>
        <begin position="506"/>
        <end position="516"/>
    </location>
</feature>
<feature type="compositionally biased region" description="Polar residues" evidence="2">
    <location>
        <begin position="517"/>
        <end position="526"/>
    </location>
</feature>
<dbReference type="EMBL" id="U00096">
    <property type="status" value="NOT_ANNOTATED_CDS"/>
    <property type="molecule type" value="Genomic_DNA"/>
</dbReference>
<dbReference type="EMBL" id="AP009048">
    <property type="status" value="NOT_ANNOTATED_CDS"/>
    <property type="molecule type" value="Genomic_DNA"/>
</dbReference>
<dbReference type="EMBL" id="X62680">
    <property type="status" value="NOT_ANNOTATED_CDS"/>
    <property type="molecule type" value="Genomic_DNA"/>
</dbReference>
<dbReference type="SMR" id="P33666"/>
<dbReference type="DIP" id="DIP-11631N"/>
<dbReference type="FunCoup" id="P33666">
    <property type="interactions" value="105"/>
</dbReference>
<dbReference type="IntAct" id="P33666">
    <property type="interactions" value="15"/>
</dbReference>
<dbReference type="EchoBASE" id="EB1284"/>
<dbReference type="InParanoid" id="P33666"/>
<dbReference type="PhylomeDB" id="P33666"/>
<dbReference type="Proteomes" id="UP000000625">
    <property type="component" value="Chromosome"/>
</dbReference>
<dbReference type="GO" id="GO:0005576">
    <property type="term" value="C:extracellular region"/>
    <property type="evidence" value="ECO:0007669"/>
    <property type="project" value="UniProtKB-SubCell"/>
</dbReference>
<keyword id="KW-1185">Reference proteome</keyword>
<keyword id="KW-0964">Secreted</keyword>
<keyword id="KW-0732">Signal</keyword>
<gene>
    <name type="primary">ydbA</name>
    <name type="ordered locus">b4492</name>
    <name type="ordered locus">JW5802/JW1402</name>
    <name type="ORF">b1401/b1405</name>
</gene>
<accession>P33666</accession>
<accession>P76087</accession>
<accession>P76088</accession>
<accession>P76856</accession>
<accession>P76857</accession>
<accession>P76859</accession>
<name>YDBA_ECOLI</name>
<proteinExistence type="inferred from homology"/>
<comment type="function">
    <text evidence="3">The full-length protein (which is about 2000 amino acids long) is part of the autotransporter family.</text>
</comment>
<comment type="subcellular location">
    <subcellularLocation>
        <location evidence="3">Secreted</location>
    </subcellularLocation>
</comment>
<comment type="miscellaneous">
    <text evidence="3">Missing up to 1200 C-terminal residues compared to orthologs. The gene coding for this protein is interrupted by a hybrid IS2D/IS30C element between amino acids 839 and 840.</text>
</comment>
<sequence length="852" mass="87130">MQRKTLLSACIALALSGQGWAADITEVETTTGEKKNTNVTCPADPGKLSPEELKRLPSECSPLVEQNLMPWLSTGAAALITALAVVELNDDDDHHHRNNSPLPPTPPDDESDDTPVPPTPGGDEIIPDDPDDTPTPPKPVSFNNDVILDKTEKTLTIRDSVFTYTENADGTISLQDSNGRKATINLWQIDEANNTVALEGVSADGATKWQYNHNGELVITGDNATVNNNGKTTVDGKDSTGTEINGNNGKVIQDGDLDVSGGGHGIDITGDSATVDNKGTMTVTDPESMGIQIDGDKAIVNNEGESTITNGGTGTQINGDDATANNNGKTTVDGKDSTGTEINGNNGKVIQDGDLDVSGGGHGIDITGDSATVDNKGTMTVTDPESIGIQVDGDQAVVNNEGESAITNGGTGTQINGDDATANNNGKTTVDGKDSTGTEIAGNNGKVIQDGDLDVSGGGHGIDITGDSATVDNKGTMTVTDPESIGIQIDGDQAIVNNEGESTITNGGTGTQINGNDATANNSGKTTVDGKDSTGTKIAGNIGIVNLDGSLTVTGGAHGVENIGDNGTVNNKGDIVVSDTGSIGVLINGEGATVSNTGDVNVSNEATGFSITTNSGKVSLAGSMQVGDFSTGVDLNGNNNSVTLAAKDLKVVGQKATGINVSGDANTVNITGNVLVDKDKTADNAAEYFFDPSVGINVYGSDNNVTLDGKLTVVSDSEVTSRQSNLFDGSAEKTSGLVVIGDGNTVNMNGGLELIGEKNALADGSQVTSLRTGYSYTSVIVVSGESSVYLNGDTTISGEFPLGFAGVIRVQDKALLEIGSGATLTMQDIDSFEHHGTRTLDLPLYFQTSVIT</sequence>
<protein>
    <recommendedName>
        <fullName>Exported protein YdbA</fullName>
    </recommendedName>
</protein>
<evidence type="ECO:0000255" key="1"/>
<evidence type="ECO:0000256" key="2">
    <source>
        <dbReference type="SAM" id="MobiDB-lite"/>
    </source>
</evidence>
<evidence type="ECO:0000305" key="3"/>